<protein>
    <recommendedName>
        <fullName evidence="1">Urease subunit gamma</fullName>
        <ecNumber evidence="1">3.5.1.5</ecNumber>
    </recommendedName>
    <alternativeName>
        <fullName evidence="1">Urea amidohydrolase subunit gamma</fullName>
    </alternativeName>
</protein>
<organism>
    <name type="scientific">Klebsiella pneumoniae (strain 342)</name>
    <dbReference type="NCBI Taxonomy" id="507522"/>
    <lineage>
        <taxon>Bacteria</taxon>
        <taxon>Pseudomonadati</taxon>
        <taxon>Pseudomonadota</taxon>
        <taxon>Gammaproteobacteria</taxon>
        <taxon>Enterobacterales</taxon>
        <taxon>Enterobacteriaceae</taxon>
        <taxon>Klebsiella/Raoultella group</taxon>
        <taxon>Klebsiella</taxon>
        <taxon>Klebsiella pneumoniae complex</taxon>
    </lineage>
</organism>
<evidence type="ECO:0000255" key="1">
    <source>
        <dbReference type="HAMAP-Rule" id="MF_00739"/>
    </source>
</evidence>
<feature type="chain" id="PRO_1000199865" description="Urease subunit gamma">
    <location>
        <begin position="1"/>
        <end position="100"/>
    </location>
</feature>
<keyword id="KW-0963">Cytoplasm</keyword>
<keyword id="KW-0378">Hydrolase</keyword>
<sequence length="100" mass="11087">MELTPREKDKLLLFTAALVAERRLARGLKLNYPESVALISAFIMEGARDGKSVASLMEEGRHVLTREQVMEGVPEMIPDIQVEATFPDGSKLVTVHNPII</sequence>
<reference key="1">
    <citation type="journal article" date="2008" name="PLoS Genet.">
        <title>Complete genome sequence of the N2-fixing broad host range endophyte Klebsiella pneumoniae 342 and virulence predictions verified in mice.</title>
        <authorList>
            <person name="Fouts D.E."/>
            <person name="Tyler H.L."/>
            <person name="DeBoy R.T."/>
            <person name="Daugherty S."/>
            <person name="Ren Q."/>
            <person name="Badger J.H."/>
            <person name="Durkin A.S."/>
            <person name="Huot H."/>
            <person name="Shrivastava S."/>
            <person name="Kothari S."/>
            <person name="Dodson R.J."/>
            <person name="Mohamoud Y."/>
            <person name="Khouri H."/>
            <person name="Roesch L.F.W."/>
            <person name="Krogfelt K.A."/>
            <person name="Struve C."/>
            <person name="Triplett E.W."/>
            <person name="Methe B.A."/>
        </authorList>
    </citation>
    <scope>NUCLEOTIDE SEQUENCE [LARGE SCALE GENOMIC DNA]</scope>
    <source>
        <strain>342</strain>
    </source>
</reference>
<proteinExistence type="inferred from homology"/>
<comment type="catalytic activity">
    <reaction evidence="1">
        <text>urea + 2 H2O + H(+) = hydrogencarbonate + 2 NH4(+)</text>
        <dbReference type="Rhea" id="RHEA:20557"/>
        <dbReference type="ChEBI" id="CHEBI:15377"/>
        <dbReference type="ChEBI" id="CHEBI:15378"/>
        <dbReference type="ChEBI" id="CHEBI:16199"/>
        <dbReference type="ChEBI" id="CHEBI:17544"/>
        <dbReference type="ChEBI" id="CHEBI:28938"/>
        <dbReference type="EC" id="3.5.1.5"/>
    </reaction>
</comment>
<comment type="pathway">
    <text evidence="1">Nitrogen metabolism; urea degradation; CO(2) and NH(3) from urea (urease route): step 1/1.</text>
</comment>
<comment type="subunit">
    <text evidence="1">Heterotrimer of UreA (gamma), UreB (beta) and UreC (alpha) subunits. Three heterotrimers associate to form the active enzyme.</text>
</comment>
<comment type="subcellular location">
    <subcellularLocation>
        <location evidence="1">Cytoplasm</location>
    </subcellularLocation>
</comment>
<comment type="similarity">
    <text evidence="1">Belongs to the urease gamma subunit family.</text>
</comment>
<accession>B5XU29</accession>
<name>URE3_KLEP3</name>
<gene>
    <name evidence="1" type="primary">ureA</name>
    <name type="ordered locus">KPK_0654</name>
</gene>
<dbReference type="EC" id="3.5.1.5" evidence="1"/>
<dbReference type="EMBL" id="CP000964">
    <property type="protein sequence ID" value="ACI11098.1"/>
    <property type="molecule type" value="Genomic_DNA"/>
</dbReference>
<dbReference type="SMR" id="B5XU29"/>
<dbReference type="KEGG" id="kpe:KPK_0654"/>
<dbReference type="HOGENOM" id="CLU_145825_1_0_6"/>
<dbReference type="UniPathway" id="UPA00258">
    <property type="reaction ID" value="UER00370"/>
</dbReference>
<dbReference type="Proteomes" id="UP000001734">
    <property type="component" value="Chromosome"/>
</dbReference>
<dbReference type="GO" id="GO:0005737">
    <property type="term" value="C:cytoplasm"/>
    <property type="evidence" value="ECO:0007669"/>
    <property type="project" value="UniProtKB-SubCell"/>
</dbReference>
<dbReference type="GO" id="GO:0016151">
    <property type="term" value="F:nickel cation binding"/>
    <property type="evidence" value="ECO:0007669"/>
    <property type="project" value="InterPro"/>
</dbReference>
<dbReference type="GO" id="GO:0009039">
    <property type="term" value="F:urease activity"/>
    <property type="evidence" value="ECO:0007669"/>
    <property type="project" value="UniProtKB-UniRule"/>
</dbReference>
<dbReference type="GO" id="GO:0043419">
    <property type="term" value="P:urea catabolic process"/>
    <property type="evidence" value="ECO:0007669"/>
    <property type="project" value="UniProtKB-UniRule"/>
</dbReference>
<dbReference type="CDD" id="cd00390">
    <property type="entry name" value="Urease_gamma"/>
    <property type="match status" value="1"/>
</dbReference>
<dbReference type="Gene3D" id="3.30.280.10">
    <property type="entry name" value="Urease, gamma-like subunit"/>
    <property type="match status" value="1"/>
</dbReference>
<dbReference type="HAMAP" id="MF_00739">
    <property type="entry name" value="Urease_gamma"/>
    <property type="match status" value="1"/>
</dbReference>
<dbReference type="InterPro" id="IPR012010">
    <property type="entry name" value="Urease_gamma"/>
</dbReference>
<dbReference type="InterPro" id="IPR002026">
    <property type="entry name" value="Urease_gamma/gamma-beta_su"/>
</dbReference>
<dbReference type="InterPro" id="IPR036463">
    <property type="entry name" value="Urease_gamma_sf"/>
</dbReference>
<dbReference type="InterPro" id="IPR050069">
    <property type="entry name" value="Urease_subunit"/>
</dbReference>
<dbReference type="NCBIfam" id="NF009712">
    <property type="entry name" value="PRK13241.1"/>
    <property type="match status" value="1"/>
</dbReference>
<dbReference type="NCBIfam" id="TIGR00193">
    <property type="entry name" value="urease_gam"/>
    <property type="match status" value="1"/>
</dbReference>
<dbReference type="PANTHER" id="PTHR33569">
    <property type="entry name" value="UREASE"/>
    <property type="match status" value="1"/>
</dbReference>
<dbReference type="PANTHER" id="PTHR33569:SF1">
    <property type="entry name" value="UREASE"/>
    <property type="match status" value="1"/>
</dbReference>
<dbReference type="Pfam" id="PF00547">
    <property type="entry name" value="Urease_gamma"/>
    <property type="match status" value="1"/>
</dbReference>
<dbReference type="PIRSF" id="PIRSF001223">
    <property type="entry name" value="Urease_gamma"/>
    <property type="match status" value="1"/>
</dbReference>
<dbReference type="SUPFAM" id="SSF54111">
    <property type="entry name" value="Urease, gamma-subunit"/>
    <property type="match status" value="1"/>
</dbReference>